<comment type="function">
    <text evidence="1">Scaffold protein that may play a role in cell adhesion, cell spreading and in the reorganization of the actin cytoskeleton. Plays a role in the regulation of cell proliferation. May act as a tumor suppressor (By similarity).</text>
</comment>
<comment type="subunit">
    <text evidence="1">Interacts via LIM domain 1 with ZYX. Interacts (via LIM domain 3) with ENAH and VASP. Interacts with ALKBH4, talin, actin, alpha-actinin, GRIP1 and PXN (By similarity). Interacts (via LIM domain 2) with ACTL7A (via N-terminus). Heterodimer with ACTL7A; the heterodimer interacts with ENAH to form a heterotrimer (By similarity).</text>
</comment>
<comment type="subcellular location">
    <subcellularLocation>
        <location evidence="1">Cytoplasm</location>
    </subcellularLocation>
    <subcellularLocation>
        <location evidence="1">Cell junction</location>
        <location evidence="1">Focal adhesion</location>
    </subcellularLocation>
    <text evidence="1">Detected along actin stress fibers.</text>
</comment>
<comment type="domain">
    <text evidence="1">The N-terminal and the C-terminal halves of the protein can associate with each other, thereby hindering interactions with ZYX.</text>
</comment>
<comment type="similarity">
    <text evidence="5">Belongs to the prickle / espinas / testin family.</text>
</comment>
<accession>Q09YJ2</accession>
<dbReference type="EMBL" id="DP000179">
    <property type="protein sequence ID" value="ABI75288.1"/>
    <property type="molecule type" value="Genomic_DNA"/>
</dbReference>
<dbReference type="RefSeq" id="NP_001182247.1">
    <property type="nucleotide sequence ID" value="NM_001195318.1"/>
</dbReference>
<dbReference type="SMR" id="Q09YJ2"/>
<dbReference type="STRING" id="9940.ENSOARP00000001562"/>
<dbReference type="PaxDb" id="9940-ENSOARP00000001562"/>
<dbReference type="Ensembl" id="ENSOART00025006398">
    <property type="protein sequence ID" value="ENSOARP00025003146"/>
    <property type="gene ID" value="ENSOARG00025003888"/>
</dbReference>
<dbReference type="Ensembl" id="ENSOART00040008169">
    <property type="protein sequence ID" value="ENSOARP00040004038"/>
    <property type="gene ID" value="ENSOARG00040005046"/>
</dbReference>
<dbReference type="Ensembl" id="ENSOART00180001205">
    <property type="protein sequence ID" value="ENSOARP00180000722"/>
    <property type="gene ID" value="ENSOARG00180000729"/>
</dbReference>
<dbReference type="Ensembl" id="ENSOART00185001125">
    <property type="protein sequence ID" value="ENSOARP00185000487"/>
    <property type="gene ID" value="ENSOARG00185000731"/>
</dbReference>
<dbReference type="Ensembl" id="ENSOART00215018463">
    <property type="protein sequence ID" value="ENSOARP00215009189"/>
    <property type="gene ID" value="ENSOARG00215011154"/>
</dbReference>
<dbReference type="Ensembl" id="ENSOART00220070138">
    <property type="protein sequence ID" value="ENSOARP00220038047"/>
    <property type="gene ID" value="ENSOARG00220042120"/>
</dbReference>
<dbReference type="Ensembl" id="ENSOART00225027623">
    <property type="protein sequence ID" value="ENSOARP00225013465"/>
    <property type="gene ID" value="ENSOARG00225016854"/>
</dbReference>
<dbReference type="Ensembl" id="ENSOART00260011410">
    <property type="protein sequence ID" value="ENSOARP00260005566"/>
    <property type="gene ID" value="ENSOARG00260007108"/>
</dbReference>
<dbReference type="GeneID" id="100126573"/>
<dbReference type="KEGG" id="oas:100126573"/>
<dbReference type="CTD" id="26136"/>
<dbReference type="eggNOG" id="KOG1704">
    <property type="taxonomic scope" value="Eukaryota"/>
</dbReference>
<dbReference type="HOGENOM" id="CLU_008937_1_1_1"/>
<dbReference type="OMA" id="PHMGPHS"/>
<dbReference type="OrthoDB" id="10069167at2759"/>
<dbReference type="Proteomes" id="UP000002356">
    <property type="component" value="Chromosome 4"/>
</dbReference>
<dbReference type="Bgee" id="ENSOARG00000001497">
    <property type="expression patterns" value="Expressed in pylorus and 52 other cell types or tissues"/>
</dbReference>
<dbReference type="GO" id="GO:0005737">
    <property type="term" value="C:cytoplasm"/>
    <property type="evidence" value="ECO:0000250"/>
    <property type="project" value="UniProtKB"/>
</dbReference>
<dbReference type="GO" id="GO:0005925">
    <property type="term" value="C:focal adhesion"/>
    <property type="evidence" value="ECO:0007669"/>
    <property type="project" value="UniProtKB-SubCell"/>
</dbReference>
<dbReference type="GO" id="GO:0008270">
    <property type="term" value="F:zinc ion binding"/>
    <property type="evidence" value="ECO:0000250"/>
    <property type="project" value="UniProtKB"/>
</dbReference>
<dbReference type="GO" id="GO:0008285">
    <property type="term" value="P:negative regulation of cell population proliferation"/>
    <property type="evidence" value="ECO:0000250"/>
    <property type="project" value="UniProtKB"/>
</dbReference>
<dbReference type="CDD" id="cd09413">
    <property type="entry name" value="LIM1_Testin"/>
    <property type="match status" value="1"/>
</dbReference>
<dbReference type="CDD" id="cd09416">
    <property type="entry name" value="LIM2_Testin"/>
    <property type="match status" value="1"/>
</dbReference>
<dbReference type="CDD" id="cd09419">
    <property type="entry name" value="LIM3_Testin"/>
    <property type="match status" value="1"/>
</dbReference>
<dbReference type="CDD" id="cd09829">
    <property type="entry name" value="PET_testin"/>
    <property type="match status" value="1"/>
</dbReference>
<dbReference type="FunFam" id="2.10.110.10:FF:000061">
    <property type="entry name" value="Testin"/>
    <property type="match status" value="1"/>
</dbReference>
<dbReference type="FunFam" id="2.10.110.10:FF:000065">
    <property type="entry name" value="Testin"/>
    <property type="match status" value="1"/>
</dbReference>
<dbReference type="FunFam" id="2.10.110.10:FF:000005">
    <property type="entry name" value="Testin isoform 1"/>
    <property type="match status" value="1"/>
</dbReference>
<dbReference type="Gene3D" id="2.10.110.10">
    <property type="entry name" value="Cysteine Rich Protein"/>
    <property type="match status" value="3"/>
</dbReference>
<dbReference type="InterPro" id="IPR034958">
    <property type="entry name" value="LIM1_Testin"/>
</dbReference>
<dbReference type="InterPro" id="IPR034959">
    <property type="entry name" value="LIM2_Testin"/>
</dbReference>
<dbReference type="InterPro" id="IPR034960">
    <property type="entry name" value="LIM3_Testin"/>
</dbReference>
<dbReference type="InterPro" id="IPR010442">
    <property type="entry name" value="PET_domain"/>
</dbReference>
<dbReference type="InterPro" id="IPR033724">
    <property type="entry name" value="PET_testin"/>
</dbReference>
<dbReference type="InterPro" id="IPR047120">
    <property type="entry name" value="Pk/Esn/Tes"/>
</dbReference>
<dbReference type="InterPro" id="IPR001781">
    <property type="entry name" value="Znf_LIM"/>
</dbReference>
<dbReference type="PANTHER" id="PTHR24211">
    <property type="entry name" value="LIM DOMAIN-CONTAINING PROTEIN"/>
    <property type="match status" value="1"/>
</dbReference>
<dbReference type="PANTHER" id="PTHR24211:SF1">
    <property type="entry name" value="TESTIN"/>
    <property type="match status" value="1"/>
</dbReference>
<dbReference type="Pfam" id="PF00412">
    <property type="entry name" value="LIM"/>
    <property type="match status" value="3"/>
</dbReference>
<dbReference type="Pfam" id="PF06297">
    <property type="entry name" value="PET"/>
    <property type="match status" value="1"/>
</dbReference>
<dbReference type="SMART" id="SM00132">
    <property type="entry name" value="LIM"/>
    <property type="match status" value="3"/>
</dbReference>
<dbReference type="SUPFAM" id="SSF57716">
    <property type="entry name" value="Glucocorticoid receptor-like (DNA-binding domain)"/>
    <property type="match status" value="2"/>
</dbReference>
<dbReference type="PROSITE" id="PS00478">
    <property type="entry name" value="LIM_DOMAIN_1"/>
    <property type="match status" value="2"/>
</dbReference>
<dbReference type="PROSITE" id="PS50023">
    <property type="entry name" value="LIM_DOMAIN_2"/>
    <property type="match status" value="3"/>
</dbReference>
<dbReference type="PROSITE" id="PS51303">
    <property type="entry name" value="PET"/>
    <property type="match status" value="1"/>
</dbReference>
<feature type="chain" id="PRO_0000260336" description="Testin">
    <location>
        <begin position="1"/>
        <end position="421"/>
    </location>
</feature>
<feature type="domain" description="PET" evidence="3">
    <location>
        <begin position="92"/>
        <end position="199"/>
    </location>
</feature>
<feature type="domain" description="LIM zinc-binding 1" evidence="2">
    <location>
        <begin position="234"/>
        <end position="297"/>
    </location>
</feature>
<feature type="domain" description="LIM zinc-binding 2" evidence="2">
    <location>
        <begin position="299"/>
        <end position="359"/>
    </location>
</feature>
<feature type="domain" description="LIM zinc-binding 3" evidence="2">
    <location>
        <begin position="362"/>
        <end position="421"/>
    </location>
</feature>
<feature type="region of interest" description="Disordered" evidence="4">
    <location>
        <begin position="133"/>
        <end position="164"/>
    </location>
</feature>
<feature type="region of interest" description="Disordered" evidence="4">
    <location>
        <begin position="193"/>
        <end position="213"/>
    </location>
</feature>
<feature type="compositionally biased region" description="Basic and acidic residues" evidence="4">
    <location>
        <begin position="155"/>
        <end position="164"/>
    </location>
</feature>
<evidence type="ECO:0000250" key="1"/>
<evidence type="ECO:0000255" key="2">
    <source>
        <dbReference type="PROSITE-ProRule" id="PRU00125"/>
    </source>
</evidence>
<evidence type="ECO:0000255" key="3">
    <source>
        <dbReference type="PROSITE-ProRule" id="PRU00636"/>
    </source>
</evidence>
<evidence type="ECO:0000256" key="4">
    <source>
        <dbReference type="SAM" id="MobiDB-lite"/>
    </source>
</evidence>
<evidence type="ECO:0000305" key="5"/>
<name>TES_SHEEP</name>
<keyword id="KW-0965">Cell junction</keyword>
<keyword id="KW-0963">Cytoplasm</keyword>
<keyword id="KW-0440">LIM domain</keyword>
<keyword id="KW-0479">Metal-binding</keyword>
<keyword id="KW-1185">Reference proteome</keyword>
<keyword id="KW-0677">Repeat</keyword>
<keyword id="KW-0862">Zinc</keyword>
<organism>
    <name type="scientific">Ovis aries</name>
    <name type="common">Sheep</name>
    <dbReference type="NCBI Taxonomy" id="9940"/>
    <lineage>
        <taxon>Eukaryota</taxon>
        <taxon>Metazoa</taxon>
        <taxon>Chordata</taxon>
        <taxon>Craniata</taxon>
        <taxon>Vertebrata</taxon>
        <taxon>Euteleostomi</taxon>
        <taxon>Mammalia</taxon>
        <taxon>Eutheria</taxon>
        <taxon>Laurasiatheria</taxon>
        <taxon>Artiodactyla</taxon>
        <taxon>Ruminantia</taxon>
        <taxon>Pecora</taxon>
        <taxon>Bovidae</taxon>
        <taxon>Caprinae</taxon>
        <taxon>Ovis</taxon>
    </lineage>
</organism>
<gene>
    <name type="primary">TES</name>
</gene>
<reference key="1">
    <citation type="submission" date="2006-09" db="EMBL/GenBank/DDBJ databases">
        <title>NISC comparative sequencing initiative.</title>
        <authorList>
            <person name="Antonellis A."/>
            <person name="Ayele K."/>
            <person name="Benjamin B."/>
            <person name="Blakesley R.W."/>
            <person name="Boakye A."/>
            <person name="Bouffard G.G."/>
            <person name="Brinkley C."/>
            <person name="Brooks S."/>
            <person name="Chu G."/>
            <person name="Coleman H."/>
            <person name="Engle J."/>
            <person name="Gestole M."/>
            <person name="Greene A."/>
            <person name="Guan X."/>
            <person name="Gupta J."/>
            <person name="Haghighi P."/>
            <person name="Han J."/>
            <person name="Hansen N."/>
            <person name="Ho S.-L."/>
            <person name="Hu P."/>
            <person name="Hunter G."/>
            <person name="Hurle B."/>
            <person name="Idol J.R."/>
            <person name="Kwong P."/>
            <person name="Laric P."/>
            <person name="Larson S."/>
            <person name="Lee-Lin S.-Q."/>
            <person name="Legaspi R."/>
            <person name="Madden M."/>
            <person name="Maduro Q.L."/>
            <person name="Maduro V.B."/>
            <person name="Margulies E.H."/>
            <person name="Masiello C."/>
            <person name="Maskeri B."/>
            <person name="McDowell J."/>
            <person name="Mojidi H.A."/>
            <person name="Mullikin J.C."/>
            <person name="Oestreicher J.S."/>
            <person name="Park M."/>
            <person name="Portnoy M.E."/>
            <person name="Prasad A."/>
            <person name="Puri O."/>
            <person name="Reddix-Dugue N."/>
            <person name="Schandler K."/>
            <person name="Schueler M.G."/>
            <person name="Sison C."/>
            <person name="Stantripop S."/>
            <person name="Stephen E."/>
            <person name="Taye A."/>
            <person name="Thomas J.W."/>
            <person name="Thomas P.J."/>
            <person name="Tsipouri V."/>
            <person name="Ung L."/>
            <person name="Vogt J.L."/>
            <person name="Wetherby K.D."/>
            <person name="Young A."/>
            <person name="Green E.D."/>
        </authorList>
    </citation>
    <scope>NUCLEOTIDE SEQUENCE [LARGE SCALE GENOMIC DNA]</scope>
</reference>
<proteinExistence type="inferred from homology"/>
<sequence length="421" mass="47992">MDLEAKVKKMGLGHEQGFGAPCLKCKEKCEGFELHFWRKICRNCKCGQEEHDVLLSNEEDRKVGKLFEDTKYTTLIAKLKSDGIPMYKRNVMILTNPVAAKKNVSINTVTYEWAPPVQNQALARQYMQMLPKEKQPVAGSEGAQYRKKQLAKQLPAHDQDPSKCHELSPKEVKEMEQFVKKYKSEALGVGDVKLPRDMNTQGPNKMYIPGGDRSTTTAVGAMEDKSAEHKRTQYSCYCCKLSMKEGDPAIYAERAGYDKLWHPACFVCSTCHELLVDMIYFWKNGKLYCGRHYCDSEKPRCAGCDELIFSNEYTQAENQNWHLKHFCCFDCDNILAGEIYVMVNDKPVCKPCYVKNHAVVCQGCHNAIDPEVQRVTYNNFSWHASTECFLCSCCSKCLIGQKFMPVEGMVFCSVECKKMMS</sequence>
<protein>
    <recommendedName>
        <fullName>Testin</fullName>
    </recommendedName>
</protein>